<dbReference type="EMBL" id="Z22176">
    <property type="protein sequence ID" value="CAA80138.2"/>
    <property type="molecule type" value="Genomic_DNA"/>
</dbReference>
<dbReference type="PIR" id="S40931">
    <property type="entry name" value="S40931"/>
</dbReference>
<dbReference type="RefSeq" id="NP_499107.2">
    <property type="nucleotide sequence ID" value="NM_066706.5"/>
</dbReference>
<dbReference type="SMR" id="P34608"/>
<dbReference type="FunCoup" id="P34608">
    <property type="interactions" value="811"/>
</dbReference>
<dbReference type="PaxDb" id="6239-ZK1098.9"/>
<dbReference type="EnsemblMetazoa" id="ZK1098.9.1">
    <property type="protein sequence ID" value="ZK1098.9.1"/>
    <property type="gene ID" value="WBGene00014225"/>
</dbReference>
<dbReference type="GeneID" id="191524"/>
<dbReference type="KEGG" id="cel:CELE_ZK1098.9"/>
<dbReference type="UCSC" id="ZK1098.9">
    <property type="organism name" value="c. elegans"/>
</dbReference>
<dbReference type="AGR" id="WB:WBGene00014225"/>
<dbReference type="CTD" id="191524"/>
<dbReference type="WormBase" id="ZK1098.9">
    <property type="protein sequence ID" value="CE44126"/>
    <property type="gene ID" value="WBGene00014225"/>
</dbReference>
<dbReference type="eggNOG" id="ENOG502RAMU">
    <property type="taxonomic scope" value="Eukaryota"/>
</dbReference>
<dbReference type="HOGENOM" id="CLU_2456933_0_0_1"/>
<dbReference type="InParanoid" id="P34608"/>
<dbReference type="OMA" id="DQYILPP"/>
<dbReference type="PRO" id="PR:P34608"/>
<dbReference type="Proteomes" id="UP000001940">
    <property type="component" value="Chromosome III"/>
</dbReference>
<dbReference type="Bgee" id="WBGene00014225">
    <property type="expression patterns" value="Expressed in larva and 3 other cell types or tissues"/>
</dbReference>
<dbReference type="GO" id="GO:0016020">
    <property type="term" value="C:membrane"/>
    <property type="evidence" value="ECO:0007669"/>
    <property type="project" value="UniProtKB-SubCell"/>
</dbReference>
<evidence type="ECO:0000255" key="1"/>
<evidence type="ECO:0000256" key="2">
    <source>
        <dbReference type="SAM" id="MobiDB-lite"/>
    </source>
</evidence>
<proteinExistence type="predicted"/>
<keyword id="KW-0472">Membrane</keyword>
<keyword id="KW-1185">Reference proteome</keyword>
<keyword id="KW-0812">Transmembrane</keyword>
<keyword id="KW-1133">Transmembrane helix</keyword>
<comment type="subcellular location">
    <subcellularLocation>
        <location>Membrane</location>
        <topology>Single-pass membrane protein</topology>
    </subcellularLocation>
</comment>
<sequence length="87" mass="9311">MSEKHFILPSSMLMIVSAVFGGIGIITTIVFVILTVLHSKSAVCKPAGKEDMKKLNGIEGMQTIKEECGGSTETSSSKPKKKAKKEV</sequence>
<accession>P34608</accession>
<feature type="chain" id="PRO_0000065560" description="Uncharacterized protein ZK1098.9">
    <location>
        <begin position="1"/>
        <end position="87"/>
    </location>
</feature>
<feature type="transmembrane region" description="Helical" evidence="1">
    <location>
        <begin position="13"/>
        <end position="33"/>
    </location>
</feature>
<feature type="region of interest" description="Disordered" evidence="2">
    <location>
        <begin position="66"/>
        <end position="87"/>
    </location>
</feature>
<feature type="compositionally biased region" description="Basic residues" evidence="2">
    <location>
        <begin position="78"/>
        <end position="87"/>
    </location>
</feature>
<protein>
    <recommendedName>
        <fullName>Uncharacterized protein ZK1098.9</fullName>
    </recommendedName>
</protein>
<gene>
    <name type="ORF">ZK1098.9</name>
</gene>
<organism>
    <name type="scientific">Caenorhabditis elegans</name>
    <dbReference type="NCBI Taxonomy" id="6239"/>
    <lineage>
        <taxon>Eukaryota</taxon>
        <taxon>Metazoa</taxon>
        <taxon>Ecdysozoa</taxon>
        <taxon>Nematoda</taxon>
        <taxon>Chromadorea</taxon>
        <taxon>Rhabditida</taxon>
        <taxon>Rhabditina</taxon>
        <taxon>Rhabditomorpha</taxon>
        <taxon>Rhabditoidea</taxon>
        <taxon>Rhabditidae</taxon>
        <taxon>Peloderinae</taxon>
        <taxon>Caenorhabditis</taxon>
    </lineage>
</organism>
<reference key="1">
    <citation type="journal article" date="1994" name="Nature">
        <title>2.2 Mb of contiguous nucleotide sequence from chromosome III of C. elegans.</title>
        <authorList>
            <person name="Wilson R."/>
            <person name="Ainscough R."/>
            <person name="Anderson K."/>
            <person name="Baynes C."/>
            <person name="Berks M."/>
            <person name="Bonfield J."/>
            <person name="Burton J."/>
            <person name="Connell M."/>
            <person name="Copsey T."/>
            <person name="Cooper J."/>
            <person name="Coulson A."/>
            <person name="Craxton M."/>
            <person name="Dear S."/>
            <person name="Du Z."/>
            <person name="Durbin R."/>
            <person name="Favello A."/>
            <person name="Fraser A."/>
            <person name="Fulton L."/>
            <person name="Gardner A."/>
            <person name="Green P."/>
            <person name="Hawkins T."/>
            <person name="Hillier L."/>
            <person name="Jier M."/>
            <person name="Johnston L."/>
            <person name="Jones M."/>
            <person name="Kershaw J."/>
            <person name="Kirsten J."/>
            <person name="Laisster N."/>
            <person name="Latreille P."/>
            <person name="Lightning J."/>
            <person name="Lloyd C."/>
            <person name="Mortimore B."/>
            <person name="O'Callaghan M."/>
            <person name="Parsons J."/>
            <person name="Percy C."/>
            <person name="Rifken L."/>
            <person name="Roopra A."/>
            <person name="Saunders D."/>
            <person name="Shownkeen R."/>
            <person name="Sims M."/>
            <person name="Smaldon N."/>
            <person name="Smith A."/>
            <person name="Smith M."/>
            <person name="Sonnhammer E."/>
            <person name="Staden R."/>
            <person name="Sulston J."/>
            <person name="Thierry-Mieg J."/>
            <person name="Thomas K."/>
            <person name="Vaudin M."/>
            <person name="Vaughan K."/>
            <person name="Waterston R."/>
            <person name="Watson A."/>
            <person name="Weinstock L."/>
            <person name="Wilkinson-Sproat J."/>
            <person name="Wohldman P."/>
        </authorList>
    </citation>
    <scope>NUCLEOTIDE SEQUENCE [LARGE SCALE GENOMIC DNA]</scope>
    <source>
        <strain>Bristol N2</strain>
    </source>
</reference>
<reference key="2">
    <citation type="journal article" date="1998" name="Science">
        <title>Genome sequence of the nematode C. elegans: a platform for investigating biology.</title>
        <authorList>
            <consortium name="The C. elegans sequencing consortium"/>
        </authorList>
    </citation>
    <scope>NUCLEOTIDE SEQUENCE [LARGE SCALE GENOMIC DNA]</scope>
    <source>
        <strain>Bristol N2</strain>
    </source>
</reference>
<name>YO69_CAEEL</name>